<organism>
    <name type="scientific">Vibrio cholerae serotype O1 (strain M66-2)</name>
    <dbReference type="NCBI Taxonomy" id="579112"/>
    <lineage>
        <taxon>Bacteria</taxon>
        <taxon>Pseudomonadati</taxon>
        <taxon>Pseudomonadota</taxon>
        <taxon>Gammaproteobacteria</taxon>
        <taxon>Vibrionales</taxon>
        <taxon>Vibrionaceae</taxon>
        <taxon>Vibrio</taxon>
    </lineage>
</organism>
<proteinExistence type="inferred from homology"/>
<reference key="1">
    <citation type="journal article" date="2008" name="PLoS ONE">
        <title>A recalibrated molecular clock and independent origins for the cholera pandemic clones.</title>
        <authorList>
            <person name="Feng L."/>
            <person name="Reeves P.R."/>
            <person name="Lan R."/>
            <person name="Ren Y."/>
            <person name="Gao C."/>
            <person name="Zhou Z."/>
            <person name="Ren Y."/>
            <person name="Cheng J."/>
            <person name="Wang W."/>
            <person name="Wang J."/>
            <person name="Qian W."/>
            <person name="Li D."/>
            <person name="Wang L."/>
        </authorList>
    </citation>
    <scope>NUCLEOTIDE SEQUENCE [LARGE SCALE GENOMIC DNA]</scope>
    <source>
        <strain>M66-2</strain>
    </source>
</reference>
<feature type="chain" id="PRO_1000116665" description="Holliday junction branch migration complex subunit RuvB">
    <location>
        <begin position="1"/>
        <end position="334"/>
    </location>
</feature>
<feature type="region of interest" description="Large ATPase domain (RuvB-L)" evidence="1">
    <location>
        <begin position="4"/>
        <end position="186"/>
    </location>
</feature>
<feature type="region of interest" description="Small ATPAse domain (RuvB-S)" evidence="1">
    <location>
        <begin position="187"/>
        <end position="257"/>
    </location>
</feature>
<feature type="region of interest" description="Head domain (RuvB-H)" evidence="1">
    <location>
        <begin position="260"/>
        <end position="334"/>
    </location>
</feature>
<feature type="binding site" evidence="1">
    <location>
        <position position="25"/>
    </location>
    <ligand>
        <name>ATP</name>
        <dbReference type="ChEBI" id="CHEBI:30616"/>
    </ligand>
</feature>
<feature type="binding site" evidence="1">
    <location>
        <position position="26"/>
    </location>
    <ligand>
        <name>ATP</name>
        <dbReference type="ChEBI" id="CHEBI:30616"/>
    </ligand>
</feature>
<feature type="binding site" evidence="1">
    <location>
        <position position="67"/>
    </location>
    <ligand>
        <name>ATP</name>
        <dbReference type="ChEBI" id="CHEBI:30616"/>
    </ligand>
</feature>
<feature type="binding site" evidence="1">
    <location>
        <position position="70"/>
    </location>
    <ligand>
        <name>ATP</name>
        <dbReference type="ChEBI" id="CHEBI:30616"/>
    </ligand>
</feature>
<feature type="binding site" evidence="1">
    <location>
        <position position="71"/>
    </location>
    <ligand>
        <name>ATP</name>
        <dbReference type="ChEBI" id="CHEBI:30616"/>
    </ligand>
</feature>
<feature type="binding site" evidence="1">
    <location>
        <position position="71"/>
    </location>
    <ligand>
        <name>Mg(2+)</name>
        <dbReference type="ChEBI" id="CHEBI:18420"/>
    </ligand>
</feature>
<feature type="binding site" evidence="1">
    <location>
        <position position="72"/>
    </location>
    <ligand>
        <name>ATP</name>
        <dbReference type="ChEBI" id="CHEBI:30616"/>
    </ligand>
</feature>
<feature type="binding site" evidence="1">
    <location>
        <begin position="133"/>
        <end position="135"/>
    </location>
    <ligand>
        <name>ATP</name>
        <dbReference type="ChEBI" id="CHEBI:30616"/>
    </ligand>
</feature>
<feature type="binding site" evidence="1">
    <location>
        <position position="176"/>
    </location>
    <ligand>
        <name>ATP</name>
        <dbReference type="ChEBI" id="CHEBI:30616"/>
    </ligand>
</feature>
<feature type="binding site" evidence="1">
    <location>
        <position position="186"/>
    </location>
    <ligand>
        <name>ATP</name>
        <dbReference type="ChEBI" id="CHEBI:30616"/>
    </ligand>
</feature>
<feature type="binding site" evidence="1">
    <location>
        <position position="223"/>
    </location>
    <ligand>
        <name>ATP</name>
        <dbReference type="ChEBI" id="CHEBI:30616"/>
    </ligand>
</feature>
<feature type="binding site" evidence="1">
    <location>
        <position position="315"/>
    </location>
    <ligand>
        <name>DNA</name>
        <dbReference type="ChEBI" id="CHEBI:16991"/>
    </ligand>
</feature>
<feature type="binding site" evidence="1">
    <location>
        <position position="320"/>
    </location>
    <ligand>
        <name>DNA</name>
        <dbReference type="ChEBI" id="CHEBI:16991"/>
    </ligand>
</feature>
<keyword id="KW-0067">ATP-binding</keyword>
<keyword id="KW-0963">Cytoplasm</keyword>
<keyword id="KW-0227">DNA damage</keyword>
<keyword id="KW-0233">DNA recombination</keyword>
<keyword id="KW-0234">DNA repair</keyword>
<keyword id="KW-0238">DNA-binding</keyword>
<keyword id="KW-0378">Hydrolase</keyword>
<keyword id="KW-0547">Nucleotide-binding</keyword>
<dbReference type="EC" id="3.6.4.-" evidence="1"/>
<dbReference type="EMBL" id="CP001233">
    <property type="protein sequence ID" value="ACP06074.1"/>
    <property type="molecule type" value="Genomic_DNA"/>
</dbReference>
<dbReference type="RefSeq" id="WP_000568491.1">
    <property type="nucleotide sequence ID" value="NC_012578.1"/>
</dbReference>
<dbReference type="SMR" id="C3LNE8"/>
<dbReference type="GeneID" id="69719524"/>
<dbReference type="KEGG" id="vcm:VCM66_1768"/>
<dbReference type="HOGENOM" id="CLU_055599_1_0_6"/>
<dbReference type="Proteomes" id="UP000001217">
    <property type="component" value="Chromosome I"/>
</dbReference>
<dbReference type="GO" id="GO:0005737">
    <property type="term" value="C:cytoplasm"/>
    <property type="evidence" value="ECO:0007669"/>
    <property type="project" value="UniProtKB-SubCell"/>
</dbReference>
<dbReference type="GO" id="GO:0048476">
    <property type="term" value="C:Holliday junction resolvase complex"/>
    <property type="evidence" value="ECO:0007669"/>
    <property type="project" value="UniProtKB-UniRule"/>
</dbReference>
<dbReference type="GO" id="GO:0005524">
    <property type="term" value="F:ATP binding"/>
    <property type="evidence" value="ECO:0007669"/>
    <property type="project" value="UniProtKB-UniRule"/>
</dbReference>
<dbReference type="GO" id="GO:0016887">
    <property type="term" value="F:ATP hydrolysis activity"/>
    <property type="evidence" value="ECO:0007669"/>
    <property type="project" value="InterPro"/>
</dbReference>
<dbReference type="GO" id="GO:0000400">
    <property type="term" value="F:four-way junction DNA binding"/>
    <property type="evidence" value="ECO:0007669"/>
    <property type="project" value="UniProtKB-UniRule"/>
</dbReference>
<dbReference type="GO" id="GO:0009378">
    <property type="term" value="F:four-way junction helicase activity"/>
    <property type="evidence" value="ECO:0007669"/>
    <property type="project" value="InterPro"/>
</dbReference>
<dbReference type="GO" id="GO:0006310">
    <property type="term" value="P:DNA recombination"/>
    <property type="evidence" value="ECO:0007669"/>
    <property type="project" value="UniProtKB-UniRule"/>
</dbReference>
<dbReference type="GO" id="GO:0006281">
    <property type="term" value="P:DNA repair"/>
    <property type="evidence" value="ECO:0007669"/>
    <property type="project" value="UniProtKB-UniRule"/>
</dbReference>
<dbReference type="CDD" id="cd00009">
    <property type="entry name" value="AAA"/>
    <property type="match status" value="1"/>
</dbReference>
<dbReference type="FunFam" id="1.10.10.10:FF:000086">
    <property type="entry name" value="Holliday junction ATP-dependent DNA helicase RuvB"/>
    <property type="match status" value="1"/>
</dbReference>
<dbReference type="FunFam" id="1.10.8.60:FF:000023">
    <property type="entry name" value="Holliday junction ATP-dependent DNA helicase RuvB"/>
    <property type="match status" value="1"/>
</dbReference>
<dbReference type="FunFam" id="3.40.50.300:FF:000073">
    <property type="entry name" value="Holliday junction ATP-dependent DNA helicase RuvB"/>
    <property type="match status" value="1"/>
</dbReference>
<dbReference type="Gene3D" id="1.10.8.60">
    <property type="match status" value="1"/>
</dbReference>
<dbReference type="Gene3D" id="3.40.50.300">
    <property type="entry name" value="P-loop containing nucleotide triphosphate hydrolases"/>
    <property type="match status" value="1"/>
</dbReference>
<dbReference type="Gene3D" id="1.10.10.10">
    <property type="entry name" value="Winged helix-like DNA-binding domain superfamily/Winged helix DNA-binding domain"/>
    <property type="match status" value="1"/>
</dbReference>
<dbReference type="HAMAP" id="MF_00016">
    <property type="entry name" value="DNA_HJ_migration_RuvB"/>
    <property type="match status" value="1"/>
</dbReference>
<dbReference type="InterPro" id="IPR003593">
    <property type="entry name" value="AAA+_ATPase"/>
</dbReference>
<dbReference type="InterPro" id="IPR041445">
    <property type="entry name" value="AAA_lid_4"/>
</dbReference>
<dbReference type="InterPro" id="IPR004605">
    <property type="entry name" value="DNA_helicase_Holl-junc_RuvB"/>
</dbReference>
<dbReference type="InterPro" id="IPR027417">
    <property type="entry name" value="P-loop_NTPase"/>
</dbReference>
<dbReference type="InterPro" id="IPR008824">
    <property type="entry name" value="RuvB-like_N"/>
</dbReference>
<dbReference type="InterPro" id="IPR008823">
    <property type="entry name" value="RuvB_C"/>
</dbReference>
<dbReference type="InterPro" id="IPR036388">
    <property type="entry name" value="WH-like_DNA-bd_sf"/>
</dbReference>
<dbReference type="InterPro" id="IPR036390">
    <property type="entry name" value="WH_DNA-bd_sf"/>
</dbReference>
<dbReference type="NCBIfam" id="NF000868">
    <property type="entry name" value="PRK00080.1"/>
    <property type="match status" value="1"/>
</dbReference>
<dbReference type="NCBIfam" id="TIGR00635">
    <property type="entry name" value="ruvB"/>
    <property type="match status" value="1"/>
</dbReference>
<dbReference type="PANTHER" id="PTHR42848">
    <property type="match status" value="1"/>
</dbReference>
<dbReference type="PANTHER" id="PTHR42848:SF1">
    <property type="entry name" value="HOLLIDAY JUNCTION BRANCH MIGRATION COMPLEX SUBUNIT RUVB"/>
    <property type="match status" value="1"/>
</dbReference>
<dbReference type="Pfam" id="PF17864">
    <property type="entry name" value="AAA_lid_4"/>
    <property type="match status" value="1"/>
</dbReference>
<dbReference type="Pfam" id="PF05491">
    <property type="entry name" value="RuvB_C"/>
    <property type="match status" value="1"/>
</dbReference>
<dbReference type="Pfam" id="PF05496">
    <property type="entry name" value="RuvB_N"/>
    <property type="match status" value="1"/>
</dbReference>
<dbReference type="SMART" id="SM00382">
    <property type="entry name" value="AAA"/>
    <property type="match status" value="1"/>
</dbReference>
<dbReference type="SUPFAM" id="SSF52540">
    <property type="entry name" value="P-loop containing nucleoside triphosphate hydrolases"/>
    <property type="match status" value="1"/>
</dbReference>
<dbReference type="SUPFAM" id="SSF46785">
    <property type="entry name" value="Winged helix' DNA-binding domain"/>
    <property type="match status" value="1"/>
</dbReference>
<comment type="function">
    <text evidence="1">The RuvA-RuvB-RuvC complex processes Holliday junction (HJ) DNA during genetic recombination and DNA repair, while the RuvA-RuvB complex plays an important role in the rescue of blocked DNA replication forks via replication fork reversal (RFR). RuvA specifically binds to HJ cruciform DNA, conferring on it an open structure. The RuvB hexamer acts as an ATP-dependent pump, pulling dsDNA into and through the RuvAB complex. RuvB forms 2 homohexamers on either side of HJ DNA bound by 1 or 2 RuvA tetramers; 4 subunits per hexamer contact DNA at a time. Coordinated motions by a converter formed by DNA-disengaged RuvB subunits stimulates ATP hydrolysis and nucleotide exchange. Immobilization of the converter enables RuvB to convert the ATP-contained energy into a lever motion, pulling 2 nucleotides of DNA out of the RuvA tetramer per ATP hydrolyzed, thus driving DNA branch migration. The RuvB motors rotate together with the DNA substrate, which together with the progressing nucleotide cycle form the mechanistic basis for DNA recombination by continuous HJ branch migration. Branch migration allows RuvC to scan DNA until it finds its consensus sequence, where it cleaves and resolves cruciform DNA.</text>
</comment>
<comment type="catalytic activity">
    <reaction evidence="1">
        <text>ATP + H2O = ADP + phosphate + H(+)</text>
        <dbReference type="Rhea" id="RHEA:13065"/>
        <dbReference type="ChEBI" id="CHEBI:15377"/>
        <dbReference type="ChEBI" id="CHEBI:15378"/>
        <dbReference type="ChEBI" id="CHEBI:30616"/>
        <dbReference type="ChEBI" id="CHEBI:43474"/>
        <dbReference type="ChEBI" id="CHEBI:456216"/>
    </reaction>
</comment>
<comment type="subunit">
    <text evidence="1">Homohexamer. Forms an RuvA(8)-RuvB(12)-Holliday junction (HJ) complex. HJ DNA is sandwiched between 2 RuvA tetramers; dsDNA enters through RuvA and exits via RuvB. An RuvB hexamer assembles on each DNA strand where it exits the tetramer. Each RuvB hexamer is contacted by two RuvA subunits (via domain III) on 2 adjacent RuvB subunits; this complex drives branch migration. In the full resolvosome a probable DNA-RuvA(4)-RuvB(12)-RuvC(2) complex forms which resolves the HJ.</text>
</comment>
<comment type="subcellular location">
    <subcellularLocation>
        <location evidence="1">Cytoplasm</location>
    </subcellularLocation>
</comment>
<comment type="domain">
    <text evidence="1">Has 3 domains, the large (RuvB-L) and small ATPase (RuvB-S) domains and the C-terminal head (RuvB-H) domain. The head domain binds DNA, while the ATPase domains jointly bind ATP, ADP or are empty depending on the state of the subunit in the translocation cycle. During a single DNA translocation step the structure of each domain remains the same, but their relative positions change.</text>
</comment>
<comment type="similarity">
    <text evidence="1">Belongs to the RuvB family.</text>
</comment>
<sequence length="334" mass="37299">MIEADRLIAPISNHFKDEEVIDRAIRPKKLADYQGQDHVRDQMEIFIQAAQMRQEALDHLLIFGPPGLGKTTLANIVANEMGVNIRTTSGPVLEKAGDLAALLTNLEENDVLFIDEIHRLSPMVEEVLYPAMEDYQLDIMIGEGPAARSIKIDLPPFTLIGATTRAGSLTSPLRDRFGIVQRLEYYKVADLQHIVQRSAQCLGLSMDSEGALEVARRARGTPRIANRLLRRVRDYAEVKGDGHICAQTADRALNMLDVDHQGFDYMDRKLLLAIMEKFSGGPVGIDNLAAAIGEEKDTIEDVLEPFLIQQGYLQRTPRGRIATDRAYLHFGIEK</sequence>
<protein>
    <recommendedName>
        <fullName evidence="1">Holliday junction branch migration complex subunit RuvB</fullName>
        <ecNumber evidence="1">3.6.4.-</ecNumber>
    </recommendedName>
</protein>
<name>RUVB_VIBCM</name>
<gene>
    <name evidence="1" type="primary">ruvB</name>
    <name type="ordered locus">VCM66_1768</name>
</gene>
<accession>C3LNE8</accession>
<evidence type="ECO:0000255" key="1">
    <source>
        <dbReference type="HAMAP-Rule" id="MF_00016"/>
    </source>
</evidence>